<accession>P38423</accession>
<dbReference type="EMBL" id="D84432">
    <property type="protein sequence ID" value="BAA12640.1"/>
    <property type="status" value="ALT_FRAME"/>
    <property type="molecule type" value="Genomic_DNA"/>
</dbReference>
<dbReference type="EMBL" id="AL009126">
    <property type="protein sequence ID" value="CAB14292.2"/>
    <property type="molecule type" value="Genomic_DNA"/>
</dbReference>
<dbReference type="EMBL" id="L08205">
    <property type="status" value="NOT_ANNOTATED_CDS"/>
    <property type="molecule type" value="Genomic_DNA"/>
</dbReference>
<dbReference type="PIR" id="E69968">
    <property type="entry name" value="E69968"/>
</dbReference>
<dbReference type="RefSeq" id="NP_390241.2">
    <property type="nucleotide sequence ID" value="NC_000964.3"/>
</dbReference>
<dbReference type="RefSeq" id="WP_003246128.1">
    <property type="nucleotide sequence ID" value="NZ_OZ025638.1"/>
</dbReference>
<dbReference type="SMR" id="P38423"/>
<dbReference type="FunCoup" id="P38423">
    <property type="interactions" value="25"/>
</dbReference>
<dbReference type="STRING" id="224308.BSU23600"/>
<dbReference type="PaxDb" id="224308-BSU23600"/>
<dbReference type="EnsemblBacteria" id="CAB14292">
    <property type="protein sequence ID" value="CAB14292"/>
    <property type="gene ID" value="BSU_23600"/>
</dbReference>
<dbReference type="GeneID" id="938718"/>
<dbReference type="KEGG" id="bsu:BSU23600"/>
<dbReference type="PATRIC" id="fig|224308.179.peg.2572"/>
<dbReference type="eggNOG" id="COG1379">
    <property type="taxonomic scope" value="Bacteria"/>
</dbReference>
<dbReference type="InParanoid" id="P38423"/>
<dbReference type="OrthoDB" id="9810135at2"/>
<dbReference type="PhylomeDB" id="P38423"/>
<dbReference type="BioCyc" id="BSUB:BSU23600-MONOMER"/>
<dbReference type="Proteomes" id="UP000001570">
    <property type="component" value="Chromosome"/>
</dbReference>
<dbReference type="CDD" id="cd19067">
    <property type="entry name" value="PfuEndoQ-like"/>
    <property type="match status" value="1"/>
</dbReference>
<dbReference type="Gene3D" id="1.10.150.20">
    <property type="entry name" value="5' to 3' exonuclease, C-terminal subdomain"/>
    <property type="match status" value="1"/>
</dbReference>
<dbReference type="Gene3D" id="3.20.20.140">
    <property type="entry name" value="Metal-dependent hydrolases"/>
    <property type="match status" value="1"/>
</dbReference>
<dbReference type="InterPro" id="IPR005287">
    <property type="entry name" value="CHP00375"/>
</dbReference>
<dbReference type="InterPro" id="IPR016195">
    <property type="entry name" value="Pol/histidinol_Pase-like"/>
</dbReference>
<dbReference type="InterPro" id="IPR010994">
    <property type="entry name" value="RuvA_2-like"/>
</dbReference>
<dbReference type="NCBIfam" id="TIGR00375">
    <property type="entry name" value="TIGR00375 family protein"/>
    <property type="match status" value="1"/>
</dbReference>
<dbReference type="PANTHER" id="PTHR40084">
    <property type="entry name" value="PHOSPHOHYDROLASE, PHP FAMILY"/>
    <property type="match status" value="1"/>
</dbReference>
<dbReference type="PANTHER" id="PTHR40084:SF1">
    <property type="entry name" value="PHOSPHOTRANSFERASE"/>
    <property type="match status" value="1"/>
</dbReference>
<dbReference type="Pfam" id="PF14520">
    <property type="entry name" value="HHH_5"/>
    <property type="match status" value="1"/>
</dbReference>
<dbReference type="Pfam" id="PF13263">
    <property type="entry name" value="PHP_C"/>
    <property type="match status" value="1"/>
</dbReference>
<dbReference type="SUPFAM" id="SSF89550">
    <property type="entry name" value="PHP domain-like"/>
    <property type="match status" value="1"/>
</dbReference>
<dbReference type="SUPFAM" id="SSF47781">
    <property type="entry name" value="RuvA domain 2-like"/>
    <property type="match status" value="1"/>
</dbReference>
<feature type="chain" id="PRO_0000049849" description="Uncharacterized protein YqxK">
    <location>
        <begin position="1"/>
        <end position="387"/>
    </location>
</feature>
<name>YQXK_BACSU</name>
<reference key="1">
    <citation type="journal article" date="1996" name="Microbiology">
        <title>Systematic sequencing of the 283 kb 210 degrees-232 degrees region of the Bacillus subtilis genome containing the skin element and many sporulation genes.</title>
        <authorList>
            <person name="Mizuno M."/>
            <person name="Masuda S."/>
            <person name="Takemaru K."/>
            <person name="Hosono S."/>
            <person name="Sato T."/>
            <person name="Takeuchi M."/>
            <person name="Kobayashi Y."/>
        </authorList>
    </citation>
    <scope>NUCLEOTIDE SEQUENCE [GENOMIC DNA]</scope>
    <source>
        <strain>168 / JH642</strain>
    </source>
</reference>
<reference key="2">
    <citation type="journal article" date="1997" name="Nature">
        <title>The complete genome sequence of the Gram-positive bacterium Bacillus subtilis.</title>
        <authorList>
            <person name="Kunst F."/>
            <person name="Ogasawara N."/>
            <person name="Moszer I."/>
            <person name="Albertini A.M."/>
            <person name="Alloni G."/>
            <person name="Azevedo V."/>
            <person name="Bertero M.G."/>
            <person name="Bessieres P."/>
            <person name="Bolotin A."/>
            <person name="Borchert S."/>
            <person name="Borriss R."/>
            <person name="Boursier L."/>
            <person name="Brans A."/>
            <person name="Braun M."/>
            <person name="Brignell S.C."/>
            <person name="Bron S."/>
            <person name="Brouillet S."/>
            <person name="Bruschi C.V."/>
            <person name="Caldwell B."/>
            <person name="Capuano V."/>
            <person name="Carter N.M."/>
            <person name="Choi S.-K."/>
            <person name="Codani J.-J."/>
            <person name="Connerton I.F."/>
            <person name="Cummings N.J."/>
            <person name="Daniel R.A."/>
            <person name="Denizot F."/>
            <person name="Devine K.M."/>
            <person name="Duesterhoeft A."/>
            <person name="Ehrlich S.D."/>
            <person name="Emmerson P.T."/>
            <person name="Entian K.-D."/>
            <person name="Errington J."/>
            <person name="Fabret C."/>
            <person name="Ferrari E."/>
            <person name="Foulger D."/>
            <person name="Fritz C."/>
            <person name="Fujita M."/>
            <person name="Fujita Y."/>
            <person name="Fuma S."/>
            <person name="Galizzi A."/>
            <person name="Galleron N."/>
            <person name="Ghim S.-Y."/>
            <person name="Glaser P."/>
            <person name="Goffeau A."/>
            <person name="Golightly E.J."/>
            <person name="Grandi G."/>
            <person name="Guiseppi G."/>
            <person name="Guy B.J."/>
            <person name="Haga K."/>
            <person name="Haiech J."/>
            <person name="Harwood C.R."/>
            <person name="Henaut A."/>
            <person name="Hilbert H."/>
            <person name="Holsappel S."/>
            <person name="Hosono S."/>
            <person name="Hullo M.-F."/>
            <person name="Itaya M."/>
            <person name="Jones L.-M."/>
            <person name="Joris B."/>
            <person name="Karamata D."/>
            <person name="Kasahara Y."/>
            <person name="Klaerr-Blanchard M."/>
            <person name="Klein C."/>
            <person name="Kobayashi Y."/>
            <person name="Koetter P."/>
            <person name="Koningstein G."/>
            <person name="Krogh S."/>
            <person name="Kumano M."/>
            <person name="Kurita K."/>
            <person name="Lapidus A."/>
            <person name="Lardinois S."/>
            <person name="Lauber J."/>
            <person name="Lazarevic V."/>
            <person name="Lee S.-M."/>
            <person name="Levine A."/>
            <person name="Liu H."/>
            <person name="Masuda S."/>
            <person name="Mauel C."/>
            <person name="Medigue C."/>
            <person name="Medina N."/>
            <person name="Mellado R.P."/>
            <person name="Mizuno M."/>
            <person name="Moestl D."/>
            <person name="Nakai S."/>
            <person name="Noback M."/>
            <person name="Noone D."/>
            <person name="O'Reilly M."/>
            <person name="Ogawa K."/>
            <person name="Ogiwara A."/>
            <person name="Oudega B."/>
            <person name="Park S.-H."/>
            <person name="Parro V."/>
            <person name="Pohl T.M."/>
            <person name="Portetelle D."/>
            <person name="Porwollik S."/>
            <person name="Prescott A.M."/>
            <person name="Presecan E."/>
            <person name="Pujic P."/>
            <person name="Purnelle B."/>
            <person name="Rapoport G."/>
            <person name="Rey M."/>
            <person name="Reynolds S."/>
            <person name="Rieger M."/>
            <person name="Rivolta C."/>
            <person name="Rocha E."/>
            <person name="Roche B."/>
            <person name="Rose M."/>
            <person name="Sadaie Y."/>
            <person name="Sato T."/>
            <person name="Scanlan E."/>
            <person name="Schleich S."/>
            <person name="Schroeter R."/>
            <person name="Scoffone F."/>
            <person name="Sekiguchi J."/>
            <person name="Sekowska A."/>
            <person name="Seror S.J."/>
            <person name="Serror P."/>
            <person name="Shin B.-S."/>
            <person name="Soldo B."/>
            <person name="Sorokin A."/>
            <person name="Tacconi E."/>
            <person name="Takagi T."/>
            <person name="Takahashi H."/>
            <person name="Takemaru K."/>
            <person name="Takeuchi M."/>
            <person name="Tamakoshi A."/>
            <person name="Tanaka T."/>
            <person name="Terpstra P."/>
            <person name="Tognoni A."/>
            <person name="Tosato V."/>
            <person name="Uchiyama S."/>
            <person name="Vandenbol M."/>
            <person name="Vannier F."/>
            <person name="Vassarotti A."/>
            <person name="Viari A."/>
            <person name="Wambutt R."/>
            <person name="Wedler E."/>
            <person name="Wedler H."/>
            <person name="Weitzenegger T."/>
            <person name="Winters P."/>
            <person name="Wipat A."/>
            <person name="Yamamoto H."/>
            <person name="Yamane K."/>
            <person name="Yasumoto K."/>
            <person name="Yata K."/>
            <person name="Yoshida K."/>
            <person name="Yoshikawa H.-F."/>
            <person name="Zumstein E."/>
            <person name="Yoshikawa H."/>
            <person name="Danchin A."/>
        </authorList>
    </citation>
    <scope>NUCLEOTIDE SEQUENCE [LARGE SCALE GENOMIC DNA]</scope>
    <source>
        <strain>168</strain>
    </source>
</reference>
<reference key="3">
    <citation type="journal article" date="2009" name="Microbiology">
        <title>From a consortium sequence to a unified sequence: the Bacillus subtilis 168 reference genome a decade later.</title>
        <authorList>
            <person name="Barbe V."/>
            <person name="Cruveiller S."/>
            <person name="Kunst F."/>
            <person name="Lenoble P."/>
            <person name="Meurice G."/>
            <person name="Sekowska A."/>
            <person name="Vallenet D."/>
            <person name="Wang T."/>
            <person name="Moszer I."/>
            <person name="Medigue C."/>
            <person name="Danchin A."/>
        </authorList>
    </citation>
    <scope>SEQUENCE REVISION TO N-TERMINUS</scope>
</reference>
<reference key="4">
    <citation type="journal article" date="1993" name="J. Bacteriol.">
        <title>Cloning and nucleotide sequence of the Bacillus subtilis ansR gene, which encodes a repressor of the ans operon coding for L-asparaginase and L-aspartase.</title>
        <authorList>
            <person name="Sun D."/>
            <person name="Setlow P."/>
        </authorList>
    </citation>
    <scope>NUCLEOTIDE SEQUENCE [GENOMIC DNA] OF 173-387</scope>
</reference>
<proteinExistence type="predicted"/>
<organism>
    <name type="scientific">Bacillus subtilis (strain 168)</name>
    <dbReference type="NCBI Taxonomy" id="224308"/>
    <lineage>
        <taxon>Bacteria</taxon>
        <taxon>Bacillati</taxon>
        <taxon>Bacillota</taxon>
        <taxon>Bacilli</taxon>
        <taxon>Bacillales</taxon>
        <taxon>Bacillaceae</taxon>
        <taxon>Bacillus</taxon>
    </lineage>
</organism>
<comment type="similarity">
    <text evidence="1">To M.jannaschii MJ0043 N-terminal region.</text>
</comment>
<comment type="sequence caution" evidence="1">
    <conflict type="frameshift">
        <sequence resource="EMBL-CDS" id="BAA12640"/>
    </conflict>
</comment>
<protein>
    <recommendedName>
        <fullName>Uncharacterized protein YqxK</fullName>
    </recommendedName>
    <alternativeName>
        <fullName>ORF2</fullName>
    </alternativeName>
</protein>
<evidence type="ECO:0000305" key="1"/>
<sequence length="387" mass="42403">MKKIYADLHIHIGRTFTGRAVKITGAKTLTLDRILVEASEHKGIELLGIIDCHSPEVILELEEGISSGKYRELDGGGIRYRSTTLLLGSELEIYDEACSGPIHVLVFMPTLADMKQFSNWLSARLKNIHLSSQRIYETGLNLQKKVQDMGGLFIPAHIFTPHKSLYGKGVKSSLTEVFDPSMIDAVELGLSCDTDMASHVSQLNPYPFLTNSDAHSLGKIGREYNELYVQSADFTEFALALKGQDDRKIIANYGLDPLLGKYYQTACEACGEPAVSGETACANCGKARFTKGVSDRLRELSDQLEVRVPRPRYVHQIPLQFVPGVGPKTLDKLKKAFGTEMAVLHEAAEEDLARVVPPKTAALIVKARSGKLELKAGGGGTYGKIKP</sequence>
<gene>
    <name type="primary">yqxK</name>
    <name type="synonym">yqkH</name>
    <name type="ordered locus">BSU23600</name>
</gene>
<keyword id="KW-1185">Reference proteome</keyword>